<name>ECP_HUMAN</name>
<organism>
    <name type="scientific">Homo sapiens</name>
    <name type="common">Human</name>
    <dbReference type="NCBI Taxonomy" id="9606"/>
    <lineage>
        <taxon>Eukaryota</taxon>
        <taxon>Metazoa</taxon>
        <taxon>Chordata</taxon>
        <taxon>Craniata</taxon>
        <taxon>Vertebrata</taxon>
        <taxon>Euteleostomi</taxon>
        <taxon>Mammalia</taxon>
        <taxon>Eutheria</taxon>
        <taxon>Euarchontoglires</taxon>
        <taxon>Primates</taxon>
        <taxon>Haplorrhini</taxon>
        <taxon>Catarrhini</taxon>
        <taxon>Hominidae</taxon>
        <taxon>Homo</taxon>
    </lineage>
</organism>
<reference key="1">
    <citation type="journal article" date="1989" name="J. Exp. Med.">
        <title>Human eosinophil cationic protein. Molecular cloning of a cytotoxin and helminthotoxin with ribonuclease activity.</title>
        <authorList>
            <person name="Rosenberg H.F."/>
            <person name="Ackerman S.J."/>
            <person name="Tenen D.G."/>
        </authorList>
    </citation>
    <scope>NUCLEOTIDE SEQUENCE [MRNA]</scope>
    <scope>VARIANT ARG-124</scope>
    <source>
        <tissue>Peripheral blood granulocyte</tissue>
    </source>
</reference>
<reference key="2">
    <citation type="journal article" date="1990" name="Genomics">
        <title>Structure and chromosome localization of the human eosinophil-derived neurotoxin and eosinophil cationic protein genes: evidence for intronless coding sequences in the ribonuclease gene superfamily.</title>
        <authorList>
            <person name="Hamann K.J."/>
            <person name="Ten R.M."/>
            <person name="Loegering D.A."/>
            <person name="Jenkins R.B."/>
            <person name="Heise M.T."/>
            <person name="Schad C.R."/>
            <person name="Pease L.R."/>
            <person name="Gleich G.J."/>
            <person name="Barker R.L."/>
        </authorList>
    </citation>
    <scope>NUCLEOTIDE SEQUENCE [MRNA]</scope>
    <scope>VARIANT ARG-124</scope>
    <source>
        <tissue>Fetal liver</tissue>
    </source>
</reference>
<reference key="3">
    <citation type="journal article" date="1989" name="J. Immunol.">
        <title>Eosinophil cationic protein cDNA. Comparison with other toxic cationic proteins and ribonucleases.</title>
        <authorList>
            <person name="Barker R.L."/>
            <person name="Loegering D.A."/>
            <person name="Ten R.M."/>
            <person name="Hamann K.J."/>
            <person name="Pease L.R."/>
            <person name="Gleich G.J."/>
        </authorList>
    </citation>
    <scope>NUCLEOTIDE SEQUENCE [GENOMIC DNA]</scope>
    <scope>VARIANT ARG-124</scope>
</reference>
<reference key="4">
    <citation type="submission" date="1990-10" db="EMBL/GenBank/DDBJ databases">
        <authorList>
            <person name="Simonsen C.C."/>
            <person name="Kennedy J."/>
            <person name="Comstock L."/>
            <person name="Ashton N."/>
            <person name="McGrogan M."/>
        </authorList>
    </citation>
    <scope>NUCLEOTIDE SEQUENCE [GENOMIC DNA]</scope>
    <scope>VARIANT ARG-124</scope>
    <source>
        <tissue>Colon</tissue>
    </source>
</reference>
<reference key="5">
    <citation type="journal article" date="2000" name="Genetics">
        <title>Sequence variation at two eosinophil-associated ribonuclease loci in humans.</title>
        <authorList>
            <person name="Zhang J."/>
            <person name="Rosenberg H.F."/>
        </authorList>
    </citation>
    <scope>NUCLEOTIDE SEQUENCE [GENOMIC DNA]</scope>
    <scope>VARIANT ARG-124</scope>
</reference>
<reference key="6">
    <citation type="journal article" date="2003" name="Nature">
        <title>The DNA sequence and analysis of human chromosome 14.</title>
        <authorList>
            <person name="Heilig R."/>
            <person name="Eckenberg R."/>
            <person name="Petit J.-L."/>
            <person name="Fonknechten N."/>
            <person name="Da Silva C."/>
            <person name="Cattolico L."/>
            <person name="Levy M."/>
            <person name="Barbe V."/>
            <person name="De Berardinis V."/>
            <person name="Ureta-Vidal A."/>
            <person name="Pelletier E."/>
            <person name="Vico V."/>
            <person name="Anthouard V."/>
            <person name="Rowen L."/>
            <person name="Madan A."/>
            <person name="Qin S."/>
            <person name="Sun H."/>
            <person name="Du H."/>
            <person name="Pepin K."/>
            <person name="Artiguenave F."/>
            <person name="Robert C."/>
            <person name="Cruaud C."/>
            <person name="Bruels T."/>
            <person name="Jaillon O."/>
            <person name="Friedlander L."/>
            <person name="Samson G."/>
            <person name="Brottier P."/>
            <person name="Cure S."/>
            <person name="Segurens B."/>
            <person name="Aniere F."/>
            <person name="Samain S."/>
            <person name="Crespeau H."/>
            <person name="Abbasi N."/>
            <person name="Aiach N."/>
            <person name="Boscus D."/>
            <person name="Dickhoff R."/>
            <person name="Dors M."/>
            <person name="Dubois I."/>
            <person name="Friedman C."/>
            <person name="Gouyvenoux M."/>
            <person name="James R."/>
            <person name="Madan A."/>
            <person name="Mairey-Estrada B."/>
            <person name="Mangenot S."/>
            <person name="Martins N."/>
            <person name="Menard M."/>
            <person name="Oztas S."/>
            <person name="Ratcliffe A."/>
            <person name="Shaffer T."/>
            <person name="Trask B."/>
            <person name="Vacherie B."/>
            <person name="Bellemere C."/>
            <person name="Belser C."/>
            <person name="Besnard-Gonnet M."/>
            <person name="Bartol-Mavel D."/>
            <person name="Boutard M."/>
            <person name="Briez-Silla S."/>
            <person name="Combette S."/>
            <person name="Dufosse-Laurent V."/>
            <person name="Ferron C."/>
            <person name="Lechaplais C."/>
            <person name="Louesse C."/>
            <person name="Muselet D."/>
            <person name="Magdelenat G."/>
            <person name="Pateau E."/>
            <person name="Petit E."/>
            <person name="Sirvain-Trukniewicz P."/>
            <person name="Trybou A."/>
            <person name="Vega-Czarny N."/>
            <person name="Bataille E."/>
            <person name="Bluet E."/>
            <person name="Bordelais I."/>
            <person name="Dubois M."/>
            <person name="Dumont C."/>
            <person name="Guerin T."/>
            <person name="Haffray S."/>
            <person name="Hammadi R."/>
            <person name="Muanga J."/>
            <person name="Pellouin V."/>
            <person name="Robert D."/>
            <person name="Wunderle E."/>
            <person name="Gauguet G."/>
            <person name="Roy A."/>
            <person name="Sainte-Marthe L."/>
            <person name="Verdier J."/>
            <person name="Verdier-Discala C."/>
            <person name="Hillier L.W."/>
            <person name="Fulton L."/>
            <person name="McPherson J."/>
            <person name="Matsuda F."/>
            <person name="Wilson R."/>
            <person name="Scarpelli C."/>
            <person name="Gyapay G."/>
            <person name="Wincker P."/>
            <person name="Saurin W."/>
            <person name="Quetier F."/>
            <person name="Waterston R."/>
            <person name="Hood L."/>
            <person name="Weissenbach J."/>
        </authorList>
    </citation>
    <scope>NUCLEOTIDE SEQUENCE [LARGE SCALE GENOMIC DNA]</scope>
</reference>
<reference key="7">
    <citation type="journal article" date="2004" name="Genome Res.">
        <title>The status, quality, and expansion of the NIH full-length cDNA project: the Mammalian Gene Collection (MGC).</title>
        <authorList>
            <consortium name="The MGC Project Team"/>
        </authorList>
    </citation>
    <scope>NUCLEOTIDE SEQUENCE [LARGE SCALE MRNA]</scope>
    <scope>VARIANT ARG-124</scope>
</reference>
<reference key="8">
    <citation type="submission" date="2001-10" db="EMBL/GenBank/DDBJ databases">
        <title>Identification of polymorphisms in the ECP gene. Relation to disease activity in Hodgkins lymphoma.</title>
        <authorList>
            <person name="Bystrom J."/>
            <person name="Molin D."/>
            <person name="Jonsson U.B."/>
            <person name="Enblad G."/>
            <person name="Sundstrom C."/>
            <person name="Hogbom E."/>
            <person name="Venge P."/>
        </authorList>
    </citation>
    <scope>NUCLEOTIDE SEQUENCE [GENOMIC DNA] OF 20-160</scope>
    <scope>VARIANTS CYS-72 AND ARG-124</scope>
</reference>
<reference key="9">
    <citation type="journal article" date="1986" name="Proc. Natl. Acad. Sci. U.S.A.">
        <title>Biochemical and functional similarities between human eosinophil-derived neurotoxin and eosinophil cationic protein: homology with ribonuclease.</title>
        <authorList>
            <person name="Gleich G.J."/>
            <person name="Loegering D.A."/>
            <person name="Bell M.P."/>
            <person name="Checkel J.L."/>
            <person name="Ackerman S.J."/>
            <person name="McKean D.J."/>
        </authorList>
    </citation>
    <scope>PROTEIN SEQUENCE OF 28-87</scope>
</reference>
<reference key="10">
    <citation type="journal article" date="1989" name="Proc. Natl. Acad. Sci. U.S.A.">
        <title>Antibiotic proteins of human polymorphonuclear leukocytes.</title>
        <authorList>
            <person name="Gabay J.E."/>
            <person name="Scott R.W."/>
            <person name="Campanelli D."/>
            <person name="Griffith J."/>
            <person name="Wilde C."/>
            <person name="Marra M.N."/>
            <person name="Seeger M."/>
            <person name="Nathan C.F."/>
        </authorList>
    </citation>
    <scope>PROTEIN SEQUENCE OF 28-47</scope>
    <scope>FUNCTION AS AN ANTIMICROBIAL PROTEIN</scope>
</reference>
<reference key="11">
    <citation type="journal article" date="2008" name="J. Biol. Chem.">
        <title>Post-translational tyrosine nitration of eosinophil granule toxins mediated by eosinophil peroxidase.</title>
        <authorList>
            <person name="Ulrich M."/>
            <person name="Petre A."/>
            <person name="Youhnovski N."/>
            <person name="Proemm F."/>
            <person name="Schirle M."/>
            <person name="Schumm M."/>
            <person name="Pero R.S."/>
            <person name="Doyle A."/>
            <person name="Checkel J."/>
            <person name="Kita H."/>
            <person name="Thiyagarajan N."/>
            <person name="Acharya K.R."/>
            <person name="Schmid-Grendelmeier P."/>
            <person name="Simon H.-U."/>
            <person name="Schwarz H."/>
            <person name="Tsutsui M."/>
            <person name="Shimokawa H."/>
            <person name="Bellon G."/>
            <person name="Lee J.J."/>
            <person name="Przybylski M."/>
            <person name="Doering G."/>
        </authorList>
    </citation>
    <scope>NITRATION AT TYR-60</scope>
</reference>
<reference key="12">
    <citation type="journal article" date="2009" name="Biochem. J.">
        <title>Bactericidal and membrane disruption activities of the eosinophil cationic protein are largely retained in an N-terminal fragment.</title>
        <authorList>
            <person name="Torrent M."/>
            <person name="de la Torre B.G."/>
            <person name="Nogues V.M."/>
            <person name="Andreu D."/>
            <person name="Boix E."/>
        </authorList>
    </citation>
    <scope>FUNCTION</scope>
    <scope>INTERACTION WITH LPS; LTA AND LIPID BILAYERS</scope>
</reference>
<reference key="13">
    <citation type="journal article" date="2010" name="Biomacromolecules">
        <title>Eosinophil cationic protein aggregation: identification of an N-terminus amyloid prone region.</title>
        <authorList>
            <person name="Torrent M."/>
            <person name="Odorizzi F."/>
            <person name="Nogues M.V."/>
            <person name="Boix E."/>
        </authorList>
    </citation>
    <scope>IN VITRO FORMATION OF AMYLOID-LIKE AGGREGATES</scope>
    <scope>MUTAGENESIS OF ILE-40</scope>
</reference>
<reference key="14">
    <citation type="journal article" date="2015" name="Proteomics">
        <title>N-terminome analysis of the human mitochondrial proteome.</title>
        <authorList>
            <person name="Vaca Jacome A.S."/>
            <person name="Rabilloud T."/>
            <person name="Schaeffer-Reiss C."/>
            <person name="Rompais M."/>
            <person name="Ayoub D."/>
            <person name="Lane L."/>
            <person name="Bairoch A."/>
            <person name="Van Dorsselaer A."/>
            <person name="Carapito C."/>
        </authorList>
    </citation>
    <scope>IDENTIFICATION BY MASS SPECTROMETRY [LARGE SCALE ANALYSIS]</scope>
</reference>
<reference key="15">
    <citation type="journal article" date="1999" name="Biochemistry">
        <title>Crystal structure of eosinophil cationic protein at 2.4 A resolution.</title>
        <authorList>
            <person name="Boix E."/>
            <person name="Leonidas D.D."/>
            <person name="Nikolovski Z."/>
            <person name="Nogues M.V."/>
            <person name="Cuchillo C.M."/>
            <person name="Acharya K.R."/>
        </authorList>
    </citation>
    <scope>X-RAY CRYSTALLOGRAPHY (2.4 ANGSTROMS) OF 28-160</scope>
</reference>
<reference key="16">
    <citation type="journal article" date="2000" name="J. Mol. Biol.">
        <title>Three-dimensional crystal structure of human eosinophil cationic protein (RNase 3) at 1.75 A resolution.</title>
        <authorList>
            <person name="Mallorqui-Fernandez G."/>
            <person name="Pous J."/>
            <person name="Peracaula R."/>
            <person name="Aymami J."/>
            <person name="Maeda T."/>
            <person name="Tada H."/>
            <person name="Yamada H."/>
            <person name="Seno M."/>
            <person name="de Llorens R."/>
            <person name="Gomis-Rueth F.-X."/>
            <person name="Coll M."/>
        </authorList>
    </citation>
    <scope>X-RAY CRYSTALLOGRAPHY (1.75 ANGSTROMS) OF 28-160</scope>
</reference>
<reference key="17">
    <citation type="journal article" date="2002" name="Biochemistry">
        <title>The crystal structure of eosinophil cationic protein in complex with 2',5'-ADP at 2.0 A resolution reveals the details of the ribonucleolytic active site.</title>
        <authorList>
            <person name="Mohan C.G."/>
            <person name="Boix E."/>
            <person name="Evans H.R."/>
            <person name="Nikolovski Z."/>
            <person name="Nogues M.V."/>
            <person name="Cuchillo C.M."/>
            <person name="Acharya K.R."/>
        </authorList>
    </citation>
    <scope>X-RAY CRYSTALLOGRAPHY (2.0 ANGSTROMS) OF 28-160</scope>
</reference>
<dbReference type="EC" id="3.1.27.-"/>
<dbReference type="EMBL" id="X15161">
    <property type="protein sequence ID" value="CAA33251.1"/>
    <property type="molecule type" value="mRNA"/>
</dbReference>
<dbReference type="EMBL" id="M28128">
    <property type="protein sequence ID" value="AAA50283.1"/>
    <property type="molecule type" value="mRNA"/>
</dbReference>
<dbReference type="EMBL" id="X16545">
    <property type="protein sequence ID" value="CAA34545.1"/>
    <property type="molecule type" value="Genomic_DNA"/>
</dbReference>
<dbReference type="EMBL" id="X55990">
    <property type="protein sequence ID" value="CAA39462.1"/>
    <property type="molecule type" value="Genomic_DNA"/>
</dbReference>
<dbReference type="EMBL" id="AF294019">
    <property type="protein sequence ID" value="AAG31589.1"/>
    <property type="molecule type" value="Genomic_DNA"/>
</dbReference>
<dbReference type="EMBL" id="AF294020">
    <property type="protein sequence ID" value="AAG31590.1"/>
    <property type="molecule type" value="Genomic_DNA"/>
</dbReference>
<dbReference type="EMBL" id="AF294021">
    <property type="protein sequence ID" value="AAG31591.1"/>
    <property type="molecule type" value="Genomic_DNA"/>
</dbReference>
<dbReference type="EMBL" id="AF294022">
    <property type="protein sequence ID" value="AAG31592.1"/>
    <property type="molecule type" value="Genomic_DNA"/>
</dbReference>
<dbReference type="EMBL" id="AF294023">
    <property type="protein sequence ID" value="AAG31593.1"/>
    <property type="molecule type" value="Genomic_DNA"/>
</dbReference>
<dbReference type="EMBL" id="AF294024">
    <property type="protein sequence ID" value="AAG31594.1"/>
    <property type="molecule type" value="Genomic_DNA"/>
</dbReference>
<dbReference type="EMBL" id="AF294025">
    <property type="protein sequence ID" value="AAG31595.1"/>
    <property type="molecule type" value="Genomic_DNA"/>
</dbReference>
<dbReference type="EMBL" id="AF294026">
    <property type="protein sequence ID" value="AAG31596.1"/>
    <property type="molecule type" value="Genomic_DNA"/>
</dbReference>
<dbReference type="EMBL" id="AL133371">
    <property type="status" value="NOT_ANNOTATED_CDS"/>
    <property type="molecule type" value="Genomic_DNA"/>
</dbReference>
<dbReference type="EMBL" id="BC096060">
    <property type="protein sequence ID" value="AAH96060.1"/>
    <property type="molecule type" value="mRNA"/>
</dbReference>
<dbReference type="EMBL" id="BC096061">
    <property type="protein sequence ID" value="AAH96061.1"/>
    <property type="molecule type" value="mRNA"/>
</dbReference>
<dbReference type="EMBL" id="BC096062">
    <property type="protein sequence ID" value="AAH96062.1"/>
    <property type="molecule type" value="mRNA"/>
</dbReference>
<dbReference type="EMBL" id="AF441204">
    <property type="protein sequence ID" value="AAL35279.1"/>
    <property type="molecule type" value="Genomic_DNA"/>
</dbReference>
<dbReference type="EMBL" id="AF441205">
    <property type="protein sequence ID" value="AAL35280.1"/>
    <property type="molecule type" value="Genomic_DNA"/>
</dbReference>
<dbReference type="EMBL" id="AF441206">
    <property type="protein sequence ID" value="AAL35281.1"/>
    <property type="molecule type" value="Genomic_DNA"/>
</dbReference>
<dbReference type="CCDS" id="CCDS9560.1"/>
<dbReference type="PIR" id="B35328">
    <property type="entry name" value="JL0106"/>
</dbReference>
<dbReference type="RefSeq" id="NP_002926.2">
    <property type="nucleotide sequence ID" value="NM_002935.2"/>
</dbReference>
<dbReference type="PDB" id="1DYT">
    <property type="method" value="X-ray"/>
    <property type="resolution" value="1.75 A"/>
    <property type="chains" value="A/B=28-160"/>
</dbReference>
<dbReference type="PDB" id="1H1H">
    <property type="method" value="X-ray"/>
    <property type="resolution" value="2.00 A"/>
    <property type="chains" value="A=28-160"/>
</dbReference>
<dbReference type="PDB" id="1QMT">
    <property type="method" value="X-ray"/>
    <property type="resolution" value="2.40 A"/>
    <property type="chains" value="A=28-160"/>
</dbReference>
<dbReference type="PDB" id="2KB5">
    <property type="method" value="NMR"/>
    <property type="chains" value="A=28-160"/>
</dbReference>
<dbReference type="PDB" id="2LVZ">
    <property type="method" value="NMR"/>
    <property type="chains" value="A=28-160"/>
</dbReference>
<dbReference type="PDB" id="4A2O">
    <property type="method" value="X-ray"/>
    <property type="resolution" value="1.69 A"/>
    <property type="chains" value="A/B=28-160"/>
</dbReference>
<dbReference type="PDB" id="4A2Y">
    <property type="method" value="X-ray"/>
    <property type="resolution" value="1.70 A"/>
    <property type="chains" value="A/B=28-160"/>
</dbReference>
<dbReference type="PDB" id="4OWZ">
    <property type="method" value="X-ray"/>
    <property type="resolution" value="1.47 A"/>
    <property type="chains" value="A/B=28-160"/>
</dbReference>
<dbReference type="PDB" id="4OXB">
    <property type="method" value="X-ray"/>
    <property type="resolution" value="1.50 A"/>
    <property type="chains" value="A/B=28-160"/>
</dbReference>
<dbReference type="PDB" id="4OXF">
    <property type="method" value="X-ray"/>
    <property type="resolution" value="1.50 A"/>
    <property type="chains" value="A/B=28-160"/>
</dbReference>
<dbReference type="PDB" id="4X08">
    <property type="method" value="X-ray"/>
    <property type="resolution" value="1.34 A"/>
    <property type="chains" value="A/B=28-160"/>
</dbReference>
<dbReference type="PDBsum" id="1DYT"/>
<dbReference type="PDBsum" id="1H1H"/>
<dbReference type="PDBsum" id="1QMT"/>
<dbReference type="PDBsum" id="2KB5"/>
<dbReference type="PDBsum" id="2LVZ"/>
<dbReference type="PDBsum" id="4A2O"/>
<dbReference type="PDBsum" id="4A2Y"/>
<dbReference type="PDBsum" id="4OWZ"/>
<dbReference type="PDBsum" id="4OXB"/>
<dbReference type="PDBsum" id="4OXF"/>
<dbReference type="PDBsum" id="4X08"/>
<dbReference type="BMRB" id="P12724"/>
<dbReference type="SMR" id="P12724"/>
<dbReference type="BioGRID" id="111966">
    <property type="interactions" value="16"/>
</dbReference>
<dbReference type="FunCoup" id="P12724">
    <property type="interactions" value="42"/>
</dbReference>
<dbReference type="IntAct" id="P12724">
    <property type="interactions" value="13"/>
</dbReference>
<dbReference type="STRING" id="9606.ENSP00000302324"/>
<dbReference type="DrugBank" id="DB02098">
    <property type="generic name" value="Adenosine-2'-5'-Diphosphate"/>
</dbReference>
<dbReference type="DrugBank" id="DB04272">
    <property type="generic name" value="Citric acid"/>
</dbReference>
<dbReference type="DrugBank" id="DB01411">
    <property type="generic name" value="Pranlukast"/>
</dbReference>
<dbReference type="GlyCosmos" id="P12724">
    <property type="glycosylation" value="3 sites, No reported glycans"/>
</dbReference>
<dbReference type="GlyGen" id="P12724">
    <property type="glycosylation" value="3 sites"/>
</dbReference>
<dbReference type="iPTMnet" id="P12724"/>
<dbReference type="PhosphoSitePlus" id="P12724"/>
<dbReference type="BioMuta" id="RNASE3"/>
<dbReference type="DMDM" id="147744558"/>
<dbReference type="MassIVE" id="P12724"/>
<dbReference type="PaxDb" id="9606-ENSP00000302324"/>
<dbReference type="PeptideAtlas" id="P12724"/>
<dbReference type="PRIDE" id="P12724"/>
<dbReference type="ProteomicsDB" id="52864"/>
<dbReference type="Pumba" id="P12724"/>
<dbReference type="Antibodypedia" id="57757">
    <property type="antibodies" value="299 antibodies from 29 providers"/>
</dbReference>
<dbReference type="DNASU" id="6037"/>
<dbReference type="Ensembl" id="ENST00000304639.4">
    <property type="protein sequence ID" value="ENSP00000302324.3"/>
    <property type="gene ID" value="ENSG00000169397.4"/>
</dbReference>
<dbReference type="GeneID" id="6037"/>
<dbReference type="KEGG" id="hsa:6037"/>
<dbReference type="MANE-Select" id="ENST00000304639.4">
    <property type="protein sequence ID" value="ENSP00000302324.3"/>
    <property type="RefSeq nucleotide sequence ID" value="NM_002935.3"/>
    <property type="RefSeq protein sequence ID" value="NP_002926.2"/>
</dbReference>
<dbReference type="UCSC" id="uc001vyj.4">
    <property type="organism name" value="human"/>
</dbReference>
<dbReference type="AGR" id="HGNC:10046"/>
<dbReference type="CTD" id="6037"/>
<dbReference type="DisGeNET" id="6037"/>
<dbReference type="GeneCards" id="RNASE3"/>
<dbReference type="HGNC" id="HGNC:10046">
    <property type="gene designation" value="RNASE3"/>
</dbReference>
<dbReference type="HPA" id="ENSG00000169397">
    <property type="expression patterns" value="Tissue enriched (bone)"/>
</dbReference>
<dbReference type="MIM" id="131398">
    <property type="type" value="gene"/>
</dbReference>
<dbReference type="neXtProt" id="NX_P12724"/>
<dbReference type="OpenTargets" id="ENSG00000169397"/>
<dbReference type="PharmGKB" id="PA34414"/>
<dbReference type="VEuPathDB" id="HostDB:ENSG00000169397"/>
<dbReference type="eggNOG" id="ENOG502TF52">
    <property type="taxonomic scope" value="Eukaryota"/>
</dbReference>
<dbReference type="GeneTree" id="ENSGT00940000162253"/>
<dbReference type="HOGENOM" id="CLU_117006_0_1_1"/>
<dbReference type="InParanoid" id="P12724"/>
<dbReference type="OMA" id="PRCTIAM"/>
<dbReference type="OrthoDB" id="9450033at2759"/>
<dbReference type="PAN-GO" id="P12724">
    <property type="GO annotations" value="5 GO annotations based on evolutionary models"/>
</dbReference>
<dbReference type="PhylomeDB" id="P12724"/>
<dbReference type="TreeFam" id="TF333393"/>
<dbReference type="PathwayCommons" id="P12724"/>
<dbReference type="Reactome" id="R-HSA-6798695">
    <property type="pathway name" value="Neutrophil degranulation"/>
</dbReference>
<dbReference type="Reactome" id="R-HSA-6803157">
    <property type="pathway name" value="Antimicrobial peptides"/>
</dbReference>
<dbReference type="SignaLink" id="P12724"/>
<dbReference type="SIGNOR" id="P12724"/>
<dbReference type="BioGRID-ORCS" id="6037">
    <property type="hits" value="13 hits in 1140 CRISPR screens"/>
</dbReference>
<dbReference type="EvolutionaryTrace" id="P12724"/>
<dbReference type="GeneWiki" id="Eosinophil_cationic_protein"/>
<dbReference type="GenomeRNAi" id="6037"/>
<dbReference type="Pharos" id="P12724">
    <property type="development level" value="Tbio"/>
</dbReference>
<dbReference type="PRO" id="PR:P12724"/>
<dbReference type="Proteomes" id="UP000005640">
    <property type="component" value="Chromosome 14"/>
</dbReference>
<dbReference type="RNAct" id="P12724">
    <property type="molecule type" value="protein"/>
</dbReference>
<dbReference type="Bgee" id="ENSG00000169397">
    <property type="expression patterns" value="Expressed in trabecular bone tissue and 125 other cell types or tissues"/>
</dbReference>
<dbReference type="GO" id="GO:0035578">
    <property type="term" value="C:azurophil granule lumen"/>
    <property type="evidence" value="ECO:0000304"/>
    <property type="project" value="Reactome"/>
</dbReference>
<dbReference type="GO" id="GO:0005576">
    <property type="term" value="C:extracellular region"/>
    <property type="evidence" value="ECO:0000304"/>
    <property type="project" value="Reactome"/>
</dbReference>
<dbReference type="GO" id="GO:0005615">
    <property type="term" value="C:extracellular space"/>
    <property type="evidence" value="ECO:0000314"/>
    <property type="project" value="UniProtKB"/>
</dbReference>
<dbReference type="GO" id="GO:0004519">
    <property type="term" value="F:endonuclease activity"/>
    <property type="evidence" value="ECO:0007669"/>
    <property type="project" value="UniProtKB-KW"/>
</dbReference>
<dbReference type="GO" id="GO:0001530">
    <property type="term" value="F:lipopolysaccharide binding"/>
    <property type="evidence" value="ECO:0000314"/>
    <property type="project" value="UniProtKB"/>
</dbReference>
<dbReference type="GO" id="GO:0003676">
    <property type="term" value="F:nucleic acid binding"/>
    <property type="evidence" value="ECO:0007669"/>
    <property type="project" value="InterPro"/>
</dbReference>
<dbReference type="GO" id="GO:0004540">
    <property type="term" value="F:RNA nuclease activity"/>
    <property type="evidence" value="ECO:0000318"/>
    <property type="project" value="GO_Central"/>
</dbReference>
<dbReference type="GO" id="GO:0019731">
    <property type="term" value="P:antibacterial humoral response"/>
    <property type="evidence" value="ECO:0000314"/>
    <property type="project" value="UniProtKB"/>
</dbReference>
<dbReference type="GO" id="GO:0061844">
    <property type="term" value="P:antimicrobial humoral immune response mediated by antimicrobial peptide"/>
    <property type="evidence" value="ECO:0000314"/>
    <property type="project" value="UniProtKB"/>
</dbReference>
<dbReference type="GO" id="GO:0006935">
    <property type="term" value="P:chemotaxis"/>
    <property type="evidence" value="ECO:0000318"/>
    <property type="project" value="GO_Central"/>
</dbReference>
<dbReference type="GO" id="GO:0050829">
    <property type="term" value="P:defense response to Gram-negative bacterium"/>
    <property type="evidence" value="ECO:0000314"/>
    <property type="project" value="UniProtKB"/>
</dbReference>
<dbReference type="GO" id="GO:0050830">
    <property type="term" value="P:defense response to Gram-positive bacterium"/>
    <property type="evidence" value="ECO:0000314"/>
    <property type="project" value="UniProtKB"/>
</dbReference>
<dbReference type="GO" id="GO:0043152">
    <property type="term" value="P:induction of bacterial agglutination"/>
    <property type="evidence" value="ECO:0000314"/>
    <property type="project" value="UniProtKB"/>
</dbReference>
<dbReference type="GO" id="GO:0045087">
    <property type="term" value="P:innate immune response"/>
    <property type="evidence" value="ECO:0000314"/>
    <property type="project" value="UniProtKB"/>
</dbReference>
<dbReference type="GO" id="GO:0002227">
    <property type="term" value="P:innate immune response in mucosa"/>
    <property type="evidence" value="ECO:0000314"/>
    <property type="project" value="UniProtKB"/>
</dbReference>
<dbReference type="GO" id="GO:0006401">
    <property type="term" value="P:RNA catabolic process"/>
    <property type="evidence" value="ECO:0000304"/>
    <property type="project" value="ProtInc"/>
</dbReference>
<dbReference type="CDD" id="cd06265">
    <property type="entry name" value="RNase_A_canonical"/>
    <property type="match status" value="1"/>
</dbReference>
<dbReference type="FunFam" id="3.10.130.10:FF:000001">
    <property type="entry name" value="Ribonuclease pancreatic"/>
    <property type="match status" value="1"/>
</dbReference>
<dbReference type="Gene3D" id="3.10.130.10">
    <property type="entry name" value="Ribonuclease A-like domain"/>
    <property type="match status" value="1"/>
</dbReference>
<dbReference type="InterPro" id="IPR001427">
    <property type="entry name" value="RNaseA"/>
</dbReference>
<dbReference type="InterPro" id="IPR036816">
    <property type="entry name" value="RNaseA-like_dom_sf"/>
</dbReference>
<dbReference type="InterPro" id="IPR023411">
    <property type="entry name" value="RNaseA_AS"/>
</dbReference>
<dbReference type="InterPro" id="IPR023412">
    <property type="entry name" value="RNaseA_domain"/>
</dbReference>
<dbReference type="PANTHER" id="PTHR11437:SF3">
    <property type="entry name" value="EOSINOPHIL CATIONIC PROTEIN"/>
    <property type="match status" value="1"/>
</dbReference>
<dbReference type="PANTHER" id="PTHR11437">
    <property type="entry name" value="RIBONUCLEASE"/>
    <property type="match status" value="1"/>
</dbReference>
<dbReference type="Pfam" id="PF00074">
    <property type="entry name" value="RnaseA"/>
    <property type="match status" value="1"/>
</dbReference>
<dbReference type="PRINTS" id="PR00794">
    <property type="entry name" value="RIBONUCLEASE"/>
</dbReference>
<dbReference type="SMART" id="SM00092">
    <property type="entry name" value="RNAse_Pc"/>
    <property type="match status" value="1"/>
</dbReference>
<dbReference type="SUPFAM" id="SSF54076">
    <property type="entry name" value="RNase A-like"/>
    <property type="match status" value="1"/>
</dbReference>
<dbReference type="PROSITE" id="PS00127">
    <property type="entry name" value="RNASE_PANCREATIC"/>
    <property type="match status" value="1"/>
</dbReference>
<comment type="function">
    <text evidence="5 9">Cytotoxin and helminthotoxin with low-efficiency ribonuclease activity. Possesses a wide variety of biological activities. Exhibits antibacterial activity, including cytoplasmic membrane depolarization of preferentially Gram-negative, but also Gram-positive strains. Promotes E.coli outer membrane detachment, alteration of the overall cell shape and partial loss of cell content.</text>
</comment>
<comment type="subunit">
    <text evidence="5">Interacts with bacterial lipopolysaccharide (LPS) and lipoteichoic acid (LTA). In vitro interacts with and insert into lipid bilayers composed of dioleoyl phosphatidylcholine and dioleoyl phosphatidylglycerol. In vitro, tends to form amyloid-like aggregates at pH 3, but not at pH 5, nor 7.</text>
</comment>
<comment type="subcellular location">
    <subcellularLocation>
        <location>Secreted</location>
    </subcellularLocation>
    <text>Located in the matrix of eosinophil large specific granule, which are released following activation by an immune stimulus.</text>
</comment>
<comment type="similarity">
    <text evidence="14">Belongs to the pancreatic ribonuclease family.</text>
</comment>
<sequence length="160" mass="18385">MVPKLFTSQICLLLLLGLMGVEGSLHARPPQFTRAQWFAIQHISLNPPRCTIAMRAINNYRWRCKNQNTFLRTTFANVVNVCGNQSIRCPHNRTLNNCHRSRFRVPLLHCDLINPGAQNISNCTYADRPGRRFYVVACDNRDPRDSPRYPVVPVHLDTTI</sequence>
<keyword id="KW-0002">3D-structure</keyword>
<keyword id="KW-0044">Antibiotic</keyword>
<keyword id="KW-0929">Antimicrobial</keyword>
<keyword id="KW-0903">Direct protein sequencing</keyword>
<keyword id="KW-1015">Disulfide bond</keyword>
<keyword id="KW-0255">Endonuclease</keyword>
<keyword id="KW-0325">Glycoprotein</keyword>
<keyword id="KW-0378">Hydrolase</keyword>
<keyword id="KW-0944">Nitration</keyword>
<keyword id="KW-0540">Nuclease</keyword>
<keyword id="KW-1267">Proteomics identification</keyword>
<keyword id="KW-1185">Reference proteome</keyword>
<keyword id="KW-0964">Secreted</keyword>
<keyword id="KW-0732">Signal</keyword>
<feature type="signal peptide" evidence="9 11">
    <location>
        <begin position="1"/>
        <end position="27"/>
    </location>
</feature>
<feature type="chain" id="PRO_0000030862" description="Eosinophil cationic protein">
    <location>
        <begin position="28"/>
        <end position="160"/>
    </location>
</feature>
<feature type="region of interest" description="Required for nearly all of the bactericidal activity; partially involved in LPS-binding and bacterial membrane depolarization">
    <location>
        <begin position="28"/>
        <end position="72"/>
    </location>
</feature>
<feature type="active site" description="Proton acceptor">
    <location>
        <position position="42"/>
    </location>
</feature>
<feature type="active site" description="Proton donor">
    <location>
        <position position="155"/>
    </location>
</feature>
<feature type="binding site">
    <location>
        <begin position="65"/>
        <end position="69"/>
    </location>
    <ligand>
        <name>substrate</name>
    </ligand>
</feature>
<feature type="site" description="May be involved in LPS-binding">
    <location>
        <position position="60"/>
    </location>
</feature>
<feature type="site" description="May be involved in LPS- and LTA-binding">
    <location>
        <position position="62"/>
    </location>
</feature>
<feature type="modified residue" description="3'-nitrotyrosine" evidence="4">
    <location>
        <position position="60"/>
    </location>
</feature>
<feature type="glycosylation site" description="N-linked (GlcNAc...) asparagine" evidence="1">
    <location>
        <position position="84"/>
    </location>
</feature>
<feature type="glycosylation site" description="N-linked (GlcNAc...) asparagine" evidence="1">
    <location>
        <position position="92"/>
    </location>
</feature>
<feature type="glycosylation site" description="N-linked (GlcNAc...) asparagine" evidence="1">
    <location>
        <position position="119"/>
    </location>
</feature>
<feature type="disulfide bond">
    <location>
        <begin position="50"/>
        <end position="110"/>
    </location>
</feature>
<feature type="disulfide bond">
    <location>
        <begin position="64"/>
        <end position="123"/>
    </location>
</feature>
<feature type="disulfide bond">
    <location>
        <begin position="82"/>
        <end position="138"/>
    </location>
</feature>
<feature type="disulfide bond">
    <location>
        <begin position="89"/>
        <end position="98"/>
    </location>
</feature>
<feature type="sequence variant" id="VAR_014109" description="In dbSNP:rs151169198." evidence="13">
    <original>R</original>
    <variation>C</variation>
    <location>
        <position position="72"/>
    </location>
</feature>
<feature type="sequence variant" id="VAR_013149" description="In dbSNP:rs2073342." evidence="2 3 7 8 10 12 13">
    <original>T</original>
    <variation>R</variation>
    <location>
        <position position="124"/>
    </location>
</feature>
<feature type="sequence variant" id="VAR_029017" description="In dbSNP:rs12147890.">
    <original>G</original>
    <variation>R</variation>
    <location>
        <position position="130"/>
    </location>
</feature>
<feature type="mutagenesis site" description="Loss of in vitro formation of amyloid-like aggregates." evidence="6">
    <original>I</original>
    <variation>A</variation>
    <location>
        <position position="40"/>
    </location>
</feature>
<feature type="strand" evidence="15">
    <location>
        <begin position="30"/>
        <end position="32"/>
    </location>
</feature>
<feature type="helix" evidence="18">
    <location>
        <begin position="34"/>
        <end position="42"/>
    </location>
</feature>
<feature type="helix" evidence="18">
    <location>
        <begin position="50"/>
        <end position="53"/>
    </location>
</feature>
<feature type="helix" evidence="18">
    <location>
        <begin position="55"/>
        <end position="58"/>
    </location>
</feature>
<feature type="strand" evidence="17">
    <location>
        <begin position="61"/>
        <end position="63"/>
    </location>
</feature>
<feature type="strand" evidence="18">
    <location>
        <begin position="66"/>
        <end position="73"/>
    </location>
</feature>
<feature type="helix" evidence="18">
    <location>
        <begin position="75"/>
        <end position="81"/>
    </location>
</feature>
<feature type="strand" evidence="18">
    <location>
        <begin position="90"/>
        <end position="92"/>
    </location>
</feature>
<feature type="turn" evidence="16">
    <location>
        <begin position="93"/>
        <end position="95"/>
    </location>
</feature>
<feature type="strand" evidence="18">
    <location>
        <begin position="98"/>
        <end position="100"/>
    </location>
</feature>
<feature type="strand" evidence="18">
    <location>
        <begin position="105"/>
        <end position="113"/>
    </location>
</feature>
<feature type="helix" evidence="18">
    <location>
        <begin position="120"/>
        <end position="122"/>
    </location>
</feature>
<feature type="strand" evidence="18">
    <location>
        <begin position="125"/>
        <end position="132"/>
    </location>
</feature>
<feature type="strand" evidence="18">
    <location>
        <begin position="134"/>
        <end position="140"/>
    </location>
</feature>
<feature type="turn" evidence="15">
    <location>
        <begin position="143"/>
        <end position="145"/>
    </location>
</feature>
<feature type="strand" evidence="18">
    <location>
        <begin position="150"/>
        <end position="159"/>
    </location>
</feature>
<accession>P12724</accession>
<accession>Q4VBC1</accession>
<accession>Q8WTP7</accession>
<accession>Q8WZ62</accession>
<accession>Q9GZN9</accession>
<proteinExistence type="evidence at protein level"/>
<protein>
    <recommendedName>
        <fullName>Eosinophil cationic protein</fullName>
        <shortName>ECP</shortName>
        <ecNumber>3.1.27.-</ecNumber>
    </recommendedName>
    <alternativeName>
        <fullName>Ribonuclease 3</fullName>
        <shortName>RNase 3</shortName>
    </alternativeName>
</protein>
<evidence type="ECO:0000255" key="1"/>
<evidence type="ECO:0000269" key="2">
    <source>
    </source>
</evidence>
<evidence type="ECO:0000269" key="3">
    <source>
    </source>
</evidence>
<evidence type="ECO:0000269" key="4">
    <source>
    </source>
</evidence>
<evidence type="ECO:0000269" key="5">
    <source>
    </source>
</evidence>
<evidence type="ECO:0000269" key="6">
    <source>
    </source>
</evidence>
<evidence type="ECO:0000269" key="7">
    <source>
    </source>
</evidence>
<evidence type="ECO:0000269" key="8">
    <source>
    </source>
</evidence>
<evidence type="ECO:0000269" key="9">
    <source>
    </source>
</evidence>
<evidence type="ECO:0000269" key="10">
    <source>
    </source>
</evidence>
<evidence type="ECO:0000269" key="11">
    <source>
    </source>
</evidence>
<evidence type="ECO:0000269" key="12">
    <source ref="4"/>
</evidence>
<evidence type="ECO:0000269" key="13">
    <source ref="8"/>
</evidence>
<evidence type="ECO:0000305" key="14"/>
<evidence type="ECO:0007829" key="15">
    <source>
        <dbReference type="PDB" id="2KB5"/>
    </source>
</evidence>
<evidence type="ECO:0007829" key="16">
    <source>
        <dbReference type="PDB" id="2LVZ"/>
    </source>
</evidence>
<evidence type="ECO:0007829" key="17">
    <source>
        <dbReference type="PDB" id="4OWZ"/>
    </source>
</evidence>
<evidence type="ECO:0007829" key="18">
    <source>
        <dbReference type="PDB" id="4X08"/>
    </source>
</evidence>
<gene>
    <name type="primary">RNASE3</name>
    <name type="synonym">ECP</name>
    <name type="synonym">RNS3</name>
</gene>